<geneLocation type="mitochondrion"/>
<evidence type="ECO:0000250" key="1"/>
<evidence type="ECO:0000250" key="2">
    <source>
        <dbReference type="UniProtKB" id="P00157"/>
    </source>
</evidence>
<evidence type="ECO:0000255" key="3">
    <source>
        <dbReference type="PROSITE-ProRule" id="PRU00967"/>
    </source>
</evidence>
<evidence type="ECO:0000255" key="4">
    <source>
        <dbReference type="PROSITE-ProRule" id="PRU00968"/>
    </source>
</evidence>
<proteinExistence type="inferred from homology"/>
<protein>
    <recommendedName>
        <fullName>Cytochrome b</fullName>
    </recommendedName>
    <alternativeName>
        <fullName>Complex III subunit 3</fullName>
    </alternativeName>
    <alternativeName>
        <fullName>Complex III subunit III</fullName>
    </alternativeName>
    <alternativeName>
        <fullName>Cytochrome b-c1 complex subunit 3</fullName>
    </alternativeName>
    <alternativeName>
        <fullName>Ubiquinol-cytochrome-c reductase complex cytochrome b subunit</fullName>
    </alternativeName>
</protein>
<dbReference type="EMBL" id="AJ489760">
    <property type="protein sequence ID" value="CAD33982.1"/>
    <property type="molecule type" value="Genomic_DNA"/>
</dbReference>
<dbReference type="SMR" id="Q6KF39"/>
<dbReference type="GO" id="GO:0005743">
    <property type="term" value="C:mitochondrial inner membrane"/>
    <property type="evidence" value="ECO:0007669"/>
    <property type="project" value="UniProtKB-SubCell"/>
</dbReference>
<dbReference type="GO" id="GO:0045275">
    <property type="term" value="C:respiratory chain complex III"/>
    <property type="evidence" value="ECO:0007669"/>
    <property type="project" value="InterPro"/>
</dbReference>
<dbReference type="GO" id="GO:0046872">
    <property type="term" value="F:metal ion binding"/>
    <property type="evidence" value="ECO:0007669"/>
    <property type="project" value="UniProtKB-KW"/>
</dbReference>
<dbReference type="GO" id="GO:0008121">
    <property type="term" value="F:ubiquinol-cytochrome-c reductase activity"/>
    <property type="evidence" value="ECO:0007669"/>
    <property type="project" value="InterPro"/>
</dbReference>
<dbReference type="GO" id="GO:0006122">
    <property type="term" value="P:mitochondrial electron transport, ubiquinol to cytochrome c"/>
    <property type="evidence" value="ECO:0007669"/>
    <property type="project" value="TreeGrafter"/>
</dbReference>
<dbReference type="CDD" id="cd00290">
    <property type="entry name" value="cytochrome_b_C"/>
    <property type="match status" value="1"/>
</dbReference>
<dbReference type="CDD" id="cd00284">
    <property type="entry name" value="Cytochrome_b_N"/>
    <property type="match status" value="1"/>
</dbReference>
<dbReference type="FunFam" id="1.20.810.10:FF:000002">
    <property type="entry name" value="Cytochrome b"/>
    <property type="match status" value="1"/>
</dbReference>
<dbReference type="Gene3D" id="1.20.810.10">
    <property type="entry name" value="Cytochrome Bc1 Complex, Chain C"/>
    <property type="match status" value="1"/>
</dbReference>
<dbReference type="InterPro" id="IPR005798">
    <property type="entry name" value="Cyt_b/b6_C"/>
</dbReference>
<dbReference type="InterPro" id="IPR036150">
    <property type="entry name" value="Cyt_b/b6_C_sf"/>
</dbReference>
<dbReference type="InterPro" id="IPR005797">
    <property type="entry name" value="Cyt_b/b6_N"/>
</dbReference>
<dbReference type="InterPro" id="IPR027387">
    <property type="entry name" value="Cytb/b6-like_sf"/>
</dbReference>
<dbReference type="InterPro" id="IPR030689">
    <property type="entry name" value="Cytochrome_b"/>
</dbReference>
<dbReference type="InterPro" id="IPR048260">
    <property type="entry name" value="Cytochrome_b_C_euk/bac"/>
</dbReference>
<dbReference type="InterPro" id="IPR048259">
    <property type="entry name" value="Cytochrome_b_N_euk/bac"/>
</dbReference>
<dbReference type="InterPro" id="IPR016174">
    <property type="entry name" value="Di-haem_cyt_TM"/>
</dbReference>
<dbReference type="PANTHER" id="PTHR19271">
    <property type="entry name" value="CYTOCHROME B"/>
    <property type="match status" value="1"/>
</dbReference>
<dbReference type="PANTHER" id="PTHR19271:SF16">
    <property type="entry name" value="CYTOCHROME B"/>
    <property type="match status" value="1"/>
</dbReference>
<dbReference type="Pfam" id="PF00032">
    <property type="entry name" value="Cytochrom_B_C"/>
    <property type="match status" value="1"/>
</dbReference>
<dbReference type="Pfam" id="PF00033">
    <property type="entry name" value="Cytochrome_B"/>
    <property type="match status" value="1"/>
</dbReference>
<dbReference type="PIRSF" id="PIRSF038885">
    <property type="entry name" value="COB"/>
    <property type="match status" value="1"/>
</dbReference>
<dbReference type="SUPFAM" id="SSF81648">
    <property type="entry name" value="a domain/subunit of cytochrome bc1 complex (Ubiquinol-cytochrome c reductase)"/>
    <property type="match status" value="1"/>
</dbReference>
<dbReference type="SUPFAM" id="SSF81342">
    <property type="entry name" value="Transmembrane di-heme cytochromes"/>
    <property type="match status" value="1"/>
</dbReference>
<dbReference type="PROSITE" id="PS51003">
    <property type="entry name" value="CYTB_CTER"/>
    <property type="match status" value="1"/>
</dbReference>
<dbReference type="PROSITE" id="PS51002">
    <property type="entry name" value="CYTB_NTER"/>
    <property type="match status" value="1"/>
</dbReference>
<sequence length="379" mass="42596">MTSPRKTHPLAKIINQSFIDLPTPSNISSWWNFGSLLGTCLIIQITTGLFLAMHYTSDTTTAFSSVAHITRDVNYGWMIRYLHANGASTFFICLFLHIGRGLYYGSFLFLKTWAVGTILLLATMATAFMGYVLPWGQMSFWGATVITNLLSAIPYVGSDLVQWIWGGFSVDKATLTRFFTFHFILPFIIAALATIHLLFLHETGSSNPSGMTSEPDKIPFHPYYSIKDILGLMFLLLVLISLTLFSPDLLTDPDNYTLANPLNTPPHIKPEWYFLFAYAILRSIPNKLGGVLALMLSILILMIIPTLHMSKQQSMAFRPITQILFWTLVADLLTLTWIGGQPVEYPYMTVGQTASIMYFLIIISLIPLSALIENKLLKW</sequence>
<comment type="function">
    <text evidence="2">Component of the ubiquinol-cytochrome c reductase complex (complex III or cytochrome b-c1 complex) that is part of the mitochondrial respiratory chain. The b-c1 complex mediates electron transfer from ubiquinol to cytochrome c. Contributes to the generation of a proton gradient across the mitochondrial membrane that is then used for ATP synthesis.</text>
</comment>
<comment type="cofactor">
    <cofactor evidence="2">
        <name>heme b</name>
        <dbReference type="ChEBI" id="CHEBI:60344"/>
    </cofactor>
    <text evidence="2">Binds 2 heme b groups non-covalently.</text>
</comment>
<comment type="subunit">
    <text evidence="2">The cytochrome bc1 complex contains 11 subunits: 3 respiratory subunits (MT-CYB, CYC1 and UQCRFS1), 2 core proteins (UQCRC1 and UQCRC2) and 6 low-molecular weight proteins (UQCRH/QCR6, UQCRB/QCR7, UQCRQ/QCR8, UQCR10/QCR9, UQCR11/QCR10 and a cleavage product of UQCRFS1). This cytochrome bc1 complex then forms a dimer.</text>
</comment>
<comment type="subcellular location">
    <subcellularLocation>
        <location evidence="2">Mitochondrion inner membrane</location>
        <topology evidence="2">Multi-pass membrane protein</topology>
    </subcellularLocation>
</comment>
<comment type="miscellaneous">
    <text evidence="1">Heme 1 (or BL or b562) is low-potential and absorbs at about 562 nm, and heme 2 (or BH or b566) is high-potential and absorbs at about 566 nm.</text>
</comment>
<comment type="similarity">
    <text evidence="3 4">Belongs to the cytochrome b family.</text>
</comment>
<comment type="caution">
    <text evidence="2">The full-length protein contains only eight transmembrane helices, not nine as predicted by bioinformatics tools.</text>
</comment>
<keyword id="KW-0249">Electron transport</keyword>
<keyword id="KW-0349">Heme</keyword>
<keyword id="KW-0408">Iron</keyword>
<keyword id="KW-0472">Membrane</keyword>
<keyword id="KW-0479">Metal-binding</keyword>
<keyword id="KW-0496">Mitochondrion</keyword>
<keyword id="KW-0999">Mitochondrion inner membrane</keyword>
<keyword id="KW-0679">Respiratory chain</keyword>
<keyword id="KW-0812">Transmembrane</keyword>
<keyword id="KW-1133">Transmembrane helix</keyword>
<keyword id="KW-0813">Transport</keyword>
<keyword id="KW-0830">Ubiquinone</keyword>
<reference key="1">
    <citation type="submission" date="2002-06" db="EMBL/GenBank/DDBJ databases">
        <title>Genetic analysis of the squirrel monkey (genus Saimiri) breeding colony of the Pasteur Institute (French Guiana).</title>
        <authorList>
            <person name="Lavergne A."/>
        </authorList>
    </citation>
    <scope>NUCLEOTIDE SEQUENCE [GENOMIC DNA]</scope>
    <source>
        <strain>Isolate SMI071</strain>
        <tissue>Liver</tissue>
    </source>
</reference>
<organism>
    <name type="scientific">Saguinus midas</name>
    <name type="common">Golden-handed tamarin</name>
    <name type="synonym">Simia midas</name>
    <dbReference type="NCBI Taxonomy" id="30586"/>
    <lineage>
        <taxon>Eukaryota</taxon>
        <taxon>Metazoa</taxon>
        <taxon>Chordata</taxon>
        <taxon>Craniata</taxon>
        <taxon>Vertebrata</taxon>
        <taxon>Euteleostomi</taxon>
        <taxon>Mammalia</taxon>
        <taxon>Eutheria</taxon>
        <taxon>Euarchontoglires</taxon>
        <taxon>Primates</taxon>
        <taxon>Haplorrhini</taxon>
        <taxon>Platyrrhini</taxon>
        <taxon>Cebidae</taxon>
        <taxon>Callitrichinae</taxon>
        <taxon>Saguinus</taxon>
    </lineage>
</organism>
<name>CYB_SAGMI</name>
<accession>Q6KF39</accession>
<feature type="chain" id="PRO_0000254856" description="Cytochrome b">
    <location>
        <begin position="1"/>
        <end position="379"/>
    </location>
</feature>
<feature type="transmembrane region" description="Helical" evidence="2">
    <location>
        <begin position="33"/>
        <end position="53"/>
    </location>
</feature>
<feature type="transmembrane region" description="Helical" evidence="2">
    <location>
        <begin position="77"/>
        <end position="98"/>
    </location>
</feature>
<feature type="transmembrane region" description="Helical" evidence="2">
    <location>
        <begin position="113"/>
        <end position="133"/>
    </location>
</feature>
<feature type="transmembrane region" description="Helical" evidence="2">
    <location>
        <begin position="178"/>
        <end position="198"/>
    </location>
</feature>
<feature type="transmembrane region" description="Helical" evidence="2">
    <location>
        <begin position="226"/>
        <end position="246"/>
    </location>
</feature>
<feature type="transmembrane region" description="Helical" evidence="2">
    <location>
        <begin position="288"/>
        <end position="308"/>
    </location>
</feature>
<feature type="transmembrane region" description="Helical" evidence="2">
    <location>
        <begin position="320"/>
        <end position="340"/>
    </location>
</feature>
<feature type="transmembrane region" description="Helical" evidence="2">
    <location>
        <begin position="347"/>
        <end position="367"/>
    </location>
</feature>
<feature type="binding site" description="axial binding residue" evidence="2">
    <location>
        <position position="83"/>
    </location>
    <ligand>
        <name>heme b</name>
        <dbReference type="ChEBI" id="CHEBI:60344"/>
        <label>b562</label>
    </ligand>
    <ligandPart>
        <name>Fe</name>
        <dbReference type="ChEBI" id="CHEBI:18248"/>
    </ligandPart>
</feature>
<feature type="binding site" description="axial binding residue" evidence="2">
    <location>
        <position position="97"/>
    </location>
    <ligand>
        <name>heme b</name>
        <dbReference type="ChEBI" id="CHEBI:60344"/>
        <label>b566</label>
    </ligand>
    <ligandPart>
        <name>Fe</name>
        <dbReference type="ChEBI" id="CHEBI:18248"/>
    </ligandPart>
</feature>
<feature type="binding site" description="axial binding residue" evidence="2">
    <location>
        <position position="182"/>
    </location>
    <ligand>
        <name>heme b</name>
        <dbReference type="ChEBI" id="CHEBI:60344"/>
        <label>b562</label>
    </ligand>
    <ligandPart>
        <name>Fe</name>
        <dbReference type="ChEBI" id="CHEBI:18248"/>
    </ligandPart>
</feature>
<feature type="binding site" description="axial binding residue" evidence="2">
    <location>
        <position position="196"/>
    </location>
    <ligand>
        <name>heme b</name>
        <dbReference type="ChEBI" id="CHEBI:60344"/>
        <label>b566</label>
    </ligand>
    <ligandPart>
        <name>Fe</name>
        <dbReference type="ChEBI" id="CHEBI:18248"/>
    </ligandPart>
</feature>
<feature type="binding site" evidence="2">
    <location>
        <position position="201"/>
    </location>
    <ligand>
        <name>a ubiquinone</name>
        <dbReference type="ChEBI" id="CHEBI:16389"/>
    </ligand>
</feature>
<gene>
    <name type="primary">MT-CYB</name>
    <name type="synonym">COB</name>
    <name type="synonym">CYTB</name>
    <name type="synonym">MTCYB</name>
</gene>